<proteinExistence type="inferred from homology"/>
<comment type="function">
    <text evidence="1">One of the primary rRNA binding proteins, it binds directly to 16S rRNA central domain where it helps coordinate assembly of the platform of the 30S subunit.</text>
</comment>
<comment type="subunit">
    <text evidence="1">Part of the 30S ribosomal subunit. Contacts proteins S5 and S12.</text>
</comment>
<comment type="similarity">
    <text evidence="1">Belongs to the universal ribosomal protein uS8 family.</text>
</comment>
<evidence type="ECO:0000255" key="1">
    <source>
        <dbReference type="HAMAP-Rule" id="MF_01302"/>
    </source>
</evidence>
<evidence type="ECO:0000305" key="2"/>
<feature type="chain" id="PRO_0000305744" description="Small ribosomal subunit protein uS8">
    <location>
        <begin position="1"/>
        <end position="132"/>
    </location>
</feature>
<keyword id="KW-0687">Ribonucleoprotein</keyword>
<keyword id="KW-0689">Ribosomal protein</keyword>
<keyword id="KW-0694">RNA-binding</keyword>
<keyword id="KW-0699">rRNA-binding</keyword>
<accession>A4IJK2</accession>
<protein>
    <recommendedName>
        <fullName evidence="1">Small ribosomal subunit protein uS8</fullName>
    </recommendedName>
    <alternativeName>
        <fullName evidence="2">30S ribosomal protein S8</fullName>
    </alternativeName>
</protein>
<gene>
    <name evidence="1" type="primary">rpsH</name>
    <name type="ordered locus">GTNG_0119</name>
</gene>
<name>RS8_GEOTN</name>
<organism>
    <name type="scientific">Geobacillus thermodenitrificans (strain NG80-2)</name>
    <dbReference type="NCBI Taxonomy" id="420246"/>
    <lineage>
        <taxon>Bacteria</taxon>
        <taxon>Bacillati</taxon>
        <taxon>Bacillota</taxon>
        <taxon>Bacilli</taxon>
        <taxon>Bacillales</taxon>
        <taxon>Anoxybacillaceae</taxon>
        <taxon>Geobacillus</taxon>
    </lineage>
</organism>
<reference key="1">
    <citation type="journal article" date="2007" name="Proc. Natl. Acad. Sci. U.S.A.">
        <title>Genome and proteome of long-chain alkane degrading Geobacillus thermodenitrificans NG80-2 isolated from a deep-subsurface oil reservoir.</title>
        <authorList>
            <person name="Feng L."/>
            <person name="Wang W."/>
            <person name="Cheng J."/>
            <person name="Ren Y."/>
            <person name="Zhao G."/>
            <person name="Gao C."/>
            <person name="Tang Y."/>
            <person name="Liu X."/>
            <person name="Han W."/>
            <person name="Peng X."/>
            <person name="Liu R."/>
            <person name="Wang L."/>
        </authorList>
    </citation>
    <scope>NUCLEOTIDE SEQUENCE [LARGE SCALE GENOMIC DNA]</scope>
    <source>
        <strain>NG80-2</strain>
    </source>
</reference>
<sequence>MVMTDPIADMLTRIRNANMVRHEKLEVPASKIKREIAEILKREGFIRDVEYIEDNKQGILRIFLKYGPNNERVITGLKRISKPGLRVYVKAHEVPRVLNGLGIAILSTSQGILTDKEARQKGTGGEVIAYVW</sequence>
<dbReference type="EMBL" id="CP000557">
    <property type="protein sequence ID" value="ABO65506.1"/>
    <property type="molecule type" value="Genomic_DNA"/>
</dbReference>
<dbReference type="RefSeq" id="WP_008881931.1">
    <property type="nucleotide sequence ID" value="NC_009328.1"/>
</dbReference>
<dbReference type="SMR" id="A4IJK2"/>
<dbReference type="KEGG" id="gtn:GTNG_0119"/>
<dbReference type="eggNOG" id="COG0096">
    <property type="taxonomic scope" value="Bacteria"/>
</dbReference>
<dbReference type="HOGENOM" id="CLU_098428_0_2_9"/>
<dbReference type="Proteomes" id="UP000001578">
    <property type="component" value="Chromosome"/>
</dbReference>
<dbReference type="GO" id="GO:1990904">
    <property type="term" value="C:ribonucleoprotein complex"/>
    <property type="evidence" value="ECO:0007669"/>
    <property type="project" value="UniProtKB-KW"/>
</dbReference>
<dbReference type="GO" id="GO:0005840">
    <property type="term" value="C:ribosome"/>
    <property type="evidence" value="ECO:0007669"/>
    <property type="project" value="UniProtKB-KW"/>
</dbReference>
<dbReference type="GO" id="GO:0019843">
    <property type="term" value="F:rRNA binding"/>
    <property type="evidence" value="ECO:0007669"/>
    <property type="project" value="UniProtKB-UniRule"/>
</dbReference>
<dbReference type="GO" id="GO:0003735">
    <property type="term" value="F:structural constituent of ribosome"/>
    <property type="evidence" value="ECO:0007669"/>
    <property type="project" value="InterPro"/>
</dbReference>
<dbReference type="GO" id="GO:0006412">
    <property type="term" value="P:translation"/>
    <property type="evidence" value="ECO:0007669"/>
    <property type="project" value="UniProtKB-UniRule"/>
</dbReference>
<dbReference type="FunFam" id="3.30.1370.30:FF:000002">
    <property type="entry name" value="30S ribosomal protein S8"/>
    <property type="match status" value="1"/>
</dbReference>
<dbReference type="FunFam" id="3.30.1490.10:FF:000001">
    <property type="entry name" value="30S ribosomal protein S8"/>
    <property type="match status" value="1"/>
</dbReference>
<dbReference type="Gene3D" id="3.30.1370.30">
    <property type="match status" value="1"/>
</dbReference>
<dbReference type="Gene3D" id="3.30.1490.10">
    <property type="match status" value="1"/>
</dbReference>
<dbReference type="HAMAP" id="MF_01302_B">
    <property type="entry name" value="Ribosomal_uS8_B"/>
    <property type="match status" value="1"/>
</dbReference>
<dbReference type="InterPro" id="IPR000630">
    <property type="entry name" value="Ribosomal_uS8"/>
</dbReference>
<dbReference type="InterPro" id="IPR047863">
    <property type="entry name" value="Ribosomal_uS8_CS"/>
</dbReference>
<dbReference type="InterPro" id="IPR035987">
    <property type="entry name" value="Ribosomal_uS8_sf"/>
</dbReference>
<dbReference type="NCBIfam" id="NF001109">
    <property type="entry name" value="PRK00136.1"/>
    <property type="match status" value="1"/>
</dbReference>
<dbReference type="PANTHER" id="PTHR11758">
    <property type="entry name" value="40S RIBOSOMAL PROTEIN S15A"/>
    <property type="match status" value="1"/>
</dbReference>
<dbReference type="Pfam" id="PF00410">
    <property type="entry name" value="Ribosomal_S8"/>
    <property type="match status" value="1"/>
</dbReference>
<dbReference type="SUPFAM" id="SSF56047">
    <property type="entry name" value="Ribosomal protein S8"/>
    <property type="match status" value="1"/>
</dbReference>
<dbReference type="PROSITE" id="PS00053">
    <property type="entry name" value="RIBOSOMAL_S8"/>
    <property type="match status" value="1"/>
</dbReference>